<organism>
    <name type="scientific">Carboxydothermus hydrogenoformans (strain ATCC BAA-161 / DSM 6008 / Z-2901)</name>
    <dbReference type="NCBI Taxonomy" id="246194"/>
    <lineage>
        <taxon>Bacteria</taxon>
        <taxon>Bacillati</taxon>
        <taxon>Bacillota</taxon>
        <taxon>Clostridia</taxon>
        <taxon>Thermoanaerobacterales</taxon>
        <taxon>Thermoanaerobacteraceae</taxon>
        <taxon>Carboxydothermus</taxon>
    </lineage>
</organism>
<proteinExistence type="inferred from homology"/>
<dbReference type="EC" id="6.3.4.3" evidence="1"/>
<dbReference type="EMBL" id="CP000141">
    <property type="protein sequence ID" value="ABB16038.1"/>
    <property type="molecule type" value="Genomic_DNA"/>
</dbReference>
<dbReference type="RefSeq" id="WP_011345255.1">
    <property type="nucleotide sequence ID" value="NC_007503.1"/>
</dbReference>
<dbReference type="SMR" id="Q3A9K2"/>
<dbReference type="STRING" id="246194.CHY_2385"/>
<dbReference type="KEGG" id="chy:CHY_2385"/>
<dbReference type="eggNOG" id="COG2759">
    <property type="taxonomic scope" value="Bacteria"/>
</dbReference>
<dbReference type="HOGENOM" id="CLU_003601_3_3_9"/>
<dbReference type="InParanoid" id="Q3A9K2"/>
<dbReference type="OrthoDB" id="9761733at2"/>
<dbReference type="UniPathway" id="UPA00193"/>
<dbReference type="Proteomes" id="UP000002706">
    <property type="component" value="Chromosome"/>
</dbReference>
<dbReference type="GO" id="GO:0005524">
    <property type="term" value="F:ATP binding"/>
    <property type="evidence" value="ECO:0007669"/>
    <property type="project" value="UniProtKB-UniRule"/>
</dbReference>
<dbReference type="GO" id="GO:0004329">
    <property type="term" value="F:formate-tetrahydrofolate ligase activity"/>
    <property type="evidence" value="ECO:0007669"/>
    <property type="project" value="UniProtKB-UniRule"/>
</dbReference>
<dbReference type="GO" id="GO:0035999">
    <property type="term" value="P:tetrahydrofolate interconversion"/>
    <property type="evidence" value="ECO:0007669"/>
    <property type="project" value="UniProtKB-UniRule"/>
</dbReference>
<dbReference type="CDD" id="cd00477">
    <property type="entry name" value="FTHFS"/>
    <property type="match status" value="1"/>
</dbReference>
<dbReference type="FunFam" id="3.30.1510.10:FF:000001">
    <property type="entry name" value="Formate--tetrahydrofolate ligase"/>
    <property type="match status" value="1"/>
</dbReference>
<dbReference type="FunFam" id="3.10.410.10:FF:000001">
    <property type="entry name" value="Putative formate--tetrahydrofolate ligase"/>
    <property type="match status" value="1"/>
</dbReference>
<dbReference type="Gene3D" id="3.30.1510.10">
    <property type="entry name" value="Domain 2, N(10)-formyltetrahydrofolate synthetase"/>
    <property type="match status" value="1"/>
</dbReference>
<dbReference type="Gene3D" id="3.10.410.10">
    <property type="entry name" value="Formyltetrahydrofolate synthetase, domain 3"/>
    <property type="match status" value="1"/>
</dbReference>
<dbReference type="Gene3D" id="3.40.50.300">
    <property type="entry name" value="P-loop containing nucleotide triphosphate hydrolases"/>
    <property type="match status" value="1"/>
</dbReference>
<dbReference type="HAMAP" id="MF_01543">
    <property type="entry name" value="FTHFS"/>
    <property type="match status" value="1"/>
</dbReference>
<dbReference type="InterPro" id="IPR000559">
    <property type="entry name" value="Formate_THF_ligase"/>
</dbReference>
<dbReference type="InterPro" id="IPR020628">
    <property type="entry name" value="Formate_THF_ligase_CS"/>
</dbReference>
<dbReference type="InterPro" id="IPR027417">
    <property type="entry name" value="P-loop_NTPase"/>
</dbReference>
<dbReference type="NCBIfam" id="NF010030">
    <property type="entry name" value="PRK13505.1"/>
    <property type="match status" value="1"/>
</dbReference>
<dbReference type="Pfam" id="PF01268">
    <property type="entry name" value="FTHFS"/>
    <property type="match status" value="1"/>
</dbReference>
<dbReference type="SUPFAM" id="SSF52540">
    <property type="entry name" value="P-loop containing nucleoside triphosphate hydrolases"/>
    <property type="match status" value="1"/>
</dbReference>
<dbReference type="PROSITE" id="PS00721">
    <property type="entry name" value="FTHFS_1"/>
    <property type="match status" value="1"/>
</dbReference>
<dbReference type="PROSITE" id="PS00722">
    <property type="entry name" value="FTHFS_2"/>
    <property type="match status" value="1"/>
</dbReference>
<keyword id="KW-0067">ATP-binding</keyword>
<keyword id="KW-0436">Ligase</keyword>
<keyword id="KW-0547">Nucleotide-binding</keyword>
<keyword id="KW-0554">One-carbon metabolism</keyword>
<keyword id="KW-1185">Reference proteome</keyword>
<protein>
    <recommendedName>
        <fullName evidence="1">Formate--tetrahydrofolate ligase</fullName>
        <ecNumber evidence="1">6.3.4.3</ecNumber>
    </recommendedName>
    <alternativeName>
        <fullName evidence="1">Formyltetrahydrofolate synthetase</fullName>
        <shortName evidence="1">FHS</shortName>
        <shortName evidence="1">FTHFS</shortName>
    </alternativeName>
</protein>
<evidence type="ECO:0000255" key="1">
    <source>
        <dbReference type="HAMAP-Rule" id="MF_01543"/>
    </source>
</evidence>
<accession>Q3A9K2</accession>
<reference key="1">
    <citation type="journal article" date="2005" name="PLoS Genet.">
        <title>Life in hot carbon monoxide: the complete genome sequence of Carboxydothermus hydrogenoformans Z-2901.</title>
        <authorList>
            <person name="Wu M."/>
            <person name="Ren Q."/>
            <person name="Durkin A.S."/>
            <person name="Daugherty S.C."/>
            <person name="Brinkac L.M."/>
            <person name="Dodson R.J."/>
            <person name="Madupu R."/>
            <person name="Sullivan S.A."/>
            <person name="Kolonay J.F."/>
            <person name="Nelson W.C."/>
            <person name="Tallon L.J."/>
            <person name="Jones K.M."/>
            <person name="Ulrich L.E."/>
            <person name="Gonzalez J.M."/>
            <person name="Zhulin I.B."/>
            <person name="Robb F.T."/>
            <person name="Eisen J.A."/>
        </authorList>
    </citation>
    <scope>NUCLEOTIDE SEQUENCE [LARGE SCALE GENOMIC DNA]</scope>
    <source>
        <strain>ATCC BAA-161 / DSM 6008 / Z-2901</strain>
    </source>
</reference>
<gene>
    <name evidence="1" type="primary">fhs</name>
    <name type="ordered locus">CHY_2385</name>
</gene>
<comment type="catalytic activity">
    <reaction evidence="1">
        <text>(6S)-5,6,7,8-tetrahydrofolate + formate + ATP = (6R)-10-formyltetrahydrofolate + ADP + phosphate</text>
        <dbReference type="Rhea" id="RHEA:20221"/>
        <dbReference type="ChEBI" id="CHEBI:15740"/>
        <dbReference type="ChEBI" id="CHEBI:30616"/>
        <dbReference type="ChEBI" id="CHEBI:43474"/>
        <dbReference type="ChEBI" id="CHEBI:57453"/>
        <dbReference type="ChEBI" id="CHEBI:195366"/>
        <dbReference type="ChEBI" id="CHEBI:456216"/>
        <dbReference type="EC" id="6.3.4.3"/>
    </reaction>
</comment>
<comment type="pathway">
    <text evidence="1">One-carbon metabolism; tetrahydrofolate interconversion.</text>
</comment>
<comment type="similarity">
    <text evidence="1">Belongs to the formate--tetrahydrofolate ligase family.</text>
</comment>
<sequence>MKSDIEIAQEAKLEPIVKIAEKLGLTEDDIELYGKYKAKIAAHVWDRIKDRPDGKLILVTAINPTPAGEGKTTTTVGLGDALSRLGKKTVIALREPSLGPSFGVKGGAAGGGYAQVVPMEDINLHFTGDLHAITTAHNLLAAMIDNHIHQGNELGIDPRRVVWRRVVDLNDRALRKVVIGLGGPAQGVPRETGFDITVASEIMAILCLASDLMDLKERFNRILIGYTYDQKPVYARDLKAAGAMTVLMKDAIKPNLVQTLEHTPAFVHGGPFANIAHGTNSILADKIALKLADYLVTEAGFGADLGAEKFFNVVCRFAGFKPSAVVIVATVRALKYNGGVPRAELNKENLEALEKGFANLEKHIENIGKFGLPAVVAINRFPTDTDAELNKLRELIEATGAEFALSEVWAKGGEGGIELAQKVLKVIEEKPANFRYLYDLEMPIKQKIETIAREIYGADGVVFTADAEKTLAKFEEMGFGNMPVIMAKTQYSLSDDPNKLGRPTGFNITVRELRASVGAGFIVAITGDIMTMPGLPKRPAAEVIDIDADGKITGLF</sequence>
<feature type="chain" id="PRO_0000300517" description="Formate--tetrahydrofolate ligase">
    <location>
        <begin position="1"/>
        <end position="556"/>
    </location>
</feature>
<feature type="binding site" evidence="1">
    <location>
        <begin position="65"/>
        <end position="72"/>
    </location>
    <ligand>
        <name>ATP</name>
        <dbReference type="ChEBI" id="CHEBI:30616"/>
    </ligand>
</feature>
<name>FTHS_CARHZ</name>